<accession>Q6ZPR6</accession>
<accession>B9EHE9</accession>
<accession>Q3V3X0</accession>
<accession>Q8BVL7</accession>
<organism>
    <name type="scientific">Mus musculus</name>
    <name type="common">Mouse</name>
    <dbReference type="NCBI Taxonomy" id="10090"/>
    <lineage>
        <taxon>Eukaryota</taxon>
        <taxon>Metazoa</taxon>
        <taxon>Chordata</taxon>
        <taxon>Craniata</taxon>
        <taxon>Vertebrata</taxon>
        <taxon>Euteleostomi</taxon>
        <taxon>Mammalia</taxon>
        <taxon>Eutheria</taxon>
        <taxon>Euarchontoglires</taxon>
        <taxon>Glires</taxon>
        <taxon>Rodentia</taxon>
        <taxon>Myomorpha</taxon>
        <taxon>Muroidea</taxon>
        <taxon>Muridae</taxon>
        <taxon>Murinae</taxon>
        <taxon>Mus</taxon>
        <taxon>Mus</taxon>
    </lineage>
</organism>
<name>IBTK_MOUSE</name>
<protein>
    <recommendedName>
        <fullName>Inhibitor of Bruton tyrosine kinase</fullName>
        <shortName>IBtk</shortName>
    </recommendedName>
</protein>
<comment type="function">
    <text evidence="1">Acts as an inhibitor of BTK tyrosine kinase activity, thereby playing a role in B-cell development. Down-regulates BTK kinase activity, leading to interference with BTK-mediated calcium mobilization and NF-kappa-B-driven transcription (By similarity).</text>
</comment>
<comment type="subunit">
    <text evidence="1">Interacts with the PH domain of BTK.</text>
</comment>
<comment type="subcellular location">
    <subcellularLocation>
        <location evidence="1">Cytoplasm</location>
    </subcellularLocation>
    <subcellularLocation>
        <location evidence="1">Membrane</location>
        <topology evidence="1">Peripheral membrane protein</topology>
    </subcellularLocation>
    <text evidence="1">Translocates to the plasma membrane upon IgM stimulation.</text>
</comment>
<comment type="alternative products">
    <event type="alternative splicing"/>
    <isoform>
        <id>Q6ZPR6-1</id>
        <name>1</name>
        <sequence type="displayed"/>
    </isoform>
    <isoform>
        <id>Q6ZPR6-2</id>
        <name>2</name>
        <sequence type="described" ref="VSP_023605"/>
    </isoform>
</comment>
<comment type="sequence caution" evidence="6">
    <conflict type="frameshift">
        <sequence resource="EMBL-CDS" id="BAC36779"/>
    </conflict>
</comment>
<keyword id="KW-0025">Alternative splicing</keyword>
<keyword id="KW-0040">ANK repeat</keyword>
<keyword id="KW-0963">Cytoplasm</keyword>
<keyword id="KW-0472">Membrane</keyword>
<keyword id="KW-0597">Phosphoprotein</keyword>
<keyword id="KW-1185">Reference proteome</keyword>
<keyword id="KW-0677">Repeat</keyword>
<gene>
    <name type="primary">Ibtk</name>
    <name type="synonym">Kiaa1417</name>
</gene>
<reference key="1">
    <citation type="submission" date="2005-07" db="EMBL/GenBank/DDBJ databases">
        <authorList>
            <person name="Mural R.J."/>
            <person name="Adams M.D."/>
            <person name="Myers E.W."/>
            <person name="Smith H.O."/>
            <person name="Venter J.C."/>
        </authorList>
    </citation>
    <scope>NUCLEOTIDE SEQUENCE [LARGE SCALE GENOMIC DNA]</scope>
</reference>
<reference key="2">
    <citation type="journal article" date="2004" name="Genome Res.">
        <title>The status, quality, and expansion of the NIH full-length cDNA project: the Mammalian Gene Collection (MGC).</title>
        <authorList>
            <consortium name="The MGC Project Team"/>
        </authorList>
    </citation>
    <scope>NUCLEOTIDE SEQUENCE [LARGE SCALE MRNA]</scope>
    <source>
        <tissue>Testis</tissue>
    </source>
</reference>
<reference key="3">
    <citation type="journal article" date="2005" name="Science">
        <title>The transcriptional landscape of the mammalian genome.</title>
        <authorList>
            <person name="Carninci P."/>
            <person name="Kasukawa T."/>
            <person name="Katayama S."/>
            <person name="Gough J."/>
            <person name="Frith M.C."/>
            <person name="Maeda N."/>
            <person name="Oyama R."/>
            <person name="Ravasi T."/>
            <person name="Lenhard B."/>
            <person name="Wells C."/>
            <person name="Kodzius R."/>
            <person name="Shimokawa K."/>
            <person name="Bajic V.B."/>
            <person name="Brenner S.E."/>
            <person name="Batalov S."/>
            <person name="Forrest A.R."/>
            <person name="Zavolan M."/>
            <person name="Davis M.J."/>
            <person name="Wilming L.G."/>
            <person name="Aidinis V."/>
            <person name="Allen J.E."/>
            <person name="Ambesi-Impiombato A."/>
            <person name="Apweiler R."/>
            <person name="Aturaliya R.N."/>
            <person name="Bailey T.L."/>
            <person name="Bansal M."/>
            <person name="Baxter L."/>
            <person name="Beisel K.W."/>
            <person name="Bersano T."/>
            <person name="Bono H."/>
            <person name="Chalk A.M."/>
            <person name="Chiu K.P."/>
            <person name="Choudhary V."/>
            <person name="Christoffels A."/>
            <person name="Clutterbuck D.R."/>
            <person name="Crowe M.L."/>
            <person name="Dalla E."/>
            <person name="Dalrymple B.P."/>
            <person name="de Bono B."/>
            <person name="Della Gatta G."/>
            <person name="di Bernardo D."/>
            <person name="Down T."/>
            <person name="Engstrom P."/>
            <person name="Fagiolini M."/>
            <person name="Faulkner G."/>
            <person name="Fletcher C.F."/>
            <person name="Fukushima T."/>
            <person name="Furuno M."/>
            <person name="Futaki S."/>
            <person name="Gariboldi M."/>
            <person name="Georgii-Hemming P."/>
            <person name="Gingeras T.R."/>
            <person name="Gojobori T."/>
            <person name="Green R.E."/>
            <person name="Gustincich S."/>
            <person name="Harbers M."/>
            <person name="Hayashi Y."/>
            <person name="Hensch T.K."/>
            <person name="Hirokawa N."/>
            <person name="Hill D."/>
            <person name="Huminiecki L."/>
            <person name="Iacono M."/>
            <person name="Ikeo K."/>
            <person name="Iwama A."/>
            <person name="Ishikawa T."/>
            <person name="Jakt M."/>
            <person name="Kanapin A."/>
            <person name="Katoh M."/>
            <person name="Kawasawa Y."/>
            <person name="Kelso J."/>
            <person name="Kitamura H."/>
            <person name="Kitano H."/>
            <person name="Kollias G."/>
            <person name="Krishnan S.P."/>
            <person name="Kruger A."/>
            <person name="Kummerfeld S.K."/>
            <person name="Kurochkin I.V."/>
            <person name="Lareau L.F."/>
            <person name="Lazarevic D."/>
            <person name="Lipovich L."/>
            <person name="Liu J."/>
            <person name="Liuni S."/>
            <person name="McWilliam S."/>
            <person name="Madan Babu M."/>
            <person name="Madera M."/>
            <person name="Marchionni L."/>
            <person name="Matsuda H."/>
            <person name="Matsuzawa S."/>
            <person name="Miki H."/>
            <person name="Mignone F."/>
            <person name="Miyake S."/>
            <person name="Morris K."/>
            <person name="Mottagui-Tabar S."/>
            <person name="Mulder N."/>
            <person name="Nakano N."/>
            <person name="Nakauchi H."/>
            <person name="Ng P."/>
            <person name="Nilsson R."/>
            <person name="Nishiguchi S."/>
            <person name="Nishikawa S."/>
            <person name="Nori F."/>
            <person name="Ohara O."/>
            <person name="Okazaki Y."/>
            <person name="Orlando V."/>
            <person name="Pang K.C."/>
            <person name="Pavan W.J."/>
            <person name="Pavesi G."/>
            <person name="Pesole G."/>
            <person name="Petrovsky N."/>
            <person name="Piazza S."/>
            <person name="Reed J."/>
            <person name="Reid J.F."/>
            <person name="Ring B.Z."/>
            <person name="Ringwald M."/>
            <person name="Rost B."/>
            <person name="Ruan Y."/>
            <person name="Salzberg S.L."/>
            <person name="Sandelin A."/>
            <person name="Schneider C."/>
            <person name="Schoenbach C."/>
            <person name="Sekiguchi K."/>
            <person name="Semple C.A."/>
            <person name="Seno S."/>
            <person name="Sessa L."/>
            <person name="Sheng Y."/>
            <person name="Shibata Y."/>
            <person name="Shimada H."/>
            <person name="Shimada K."/>
            <person name="Silva D."/>
            <person name="Sinclair B."/>
            <person name="Sperling S."/>
            <person name="Stupka E."/>
            <person name="Sugiura K."/>
            <person name="Sultana R."/>
            <person name="Takenaka Y."/>
            <person name="Taki K."/>
            <person name="Tammoja K."/>
            <person name="Tan S.L."/>
            <person name="Tang S."/>
            <person name="Taylor M.S."/>
            <person name="Tegner J."/>
            <person name="Teichmann S.A."/>
            <person name="Ueda H.R."/>
            <person name="van Nimwegen E."/>
            <person name="Verardo R."/>
            <person name="Wei C.L."/>
            <person name="Yagi K."/>
            <person name="Yamanishi H."/>
            <person name="Zabarovsky E."/>
            <person name="Zhu S."/>
            <person name="Zimmer A."/>
            <person name="Hide W."/>
            <person name="Bult C."/>
            <person name="Grimmond S.M."/>
            <person name="Teasdale R.D."/>
            <person name="Liu E.T."/>
            <person name="Brusic V."/>
            <person name="Quackenbush J."/>
            <person name="Wahlestedt C."/>
            <person name="Mattick J.S."/>
            <person name="Hume D.A."/>
            <person name="Kai C."/>
            <person name="Sasaki D."/>
            <person name="Tomaru Y."/>
            <person name="Fukuda S."/>
            <person name="Kanamori-Katayama M."/>
            <person name="Suzuki M."/>
            <person name="Aoki J."/>
            <person name="Arakawa T."/>
            <person name="Iida J."/>
            <person name="Imamura K."/>
            <person name="Itoh M."/>
            <person name="Kato T."/>
            <person name="Kawaji H."/>
            <person name="Kawagashira N."/>
            <person name="Kawashima T."/>
            <person name="Kojima M."/>
            <person name="Kondo S."/>
            <person name="Konno H."/>
            <person name="Nakano K."/>
            <person name="Ninomiya N."/>
            <person name="Nishio T."/>
            <person name="Okada M."/>
            <person name="Plessy C."/>
            <person name="Shibata K."/>
            <person name="Shiraki T."/>
            <person name="Suzuki S."/>
            <person name="Tagami M."/>
            <person name="Waki K."/>
            <person name="Watahiki A."/>
            <person name="Okamura-Oho Y."/>
            <person name="Suzuki H."/>
            <person name="Kawai J."/>
            <person name="Hayashizaki Y."/>
        </authorList>
    </citation>
    <scope>NUCLEOTIDE SEQUENCE [LARGE SCALE MRNA] OF 1-742 AND 1097-1352 (ISOFORM 1)</scope>
    <source>
        <strain>C57BL/6J</strain>
        <tissue>Head</tissue>
        <tissue>Thymus</tissue>
    </source>
</reference>
<reference key="4">
    <citation type="journal article" date="2003" name="DNA Res.">
        <title>Prediction of the coding sequences of mouse homologues of KIAA gene: III. The complete nucleotide sequences of 500 mouse KIAA-homologous cDNAs identified by screening of terminal sequences of cDNA clones randomly sampled from size-fractionated libraries.</title>
        <authorList>
            <person name="Okazaki N."/>
            <person name="Kikuno R."/>
            <person name="Ohara R."/>
            <person name="Inamoto S."/>
            <person name="Koseki H."/>
            <person name="Hiraoka S."/>
            <person name="Saga Y."/>
            <person name="Nagase T."/>
            <person name="Ohara O."/>
            <person name="Koga H."/>
        </authorList>
    </citation>
    <scope>NUCLEOTIDE SEQUENCE [LARGE SCALE MRNA] OF 85-1352 (ISOFORM 2)</scope>
    <source>
        <tissue>Embryonic tail</tissue>
    </source>
</reference>
<reference key="5">
    <citation type="journal article" date="2007" name="Proc. Natl. Acad. Sci. U.S.A.">
        <title>Large-scale phosphorylation analysis of mouse liver.</title>
        <authorList>
            <person name="Villen J."/>
            <person name="Beausoleil S.A."/>
            <person name="Gerber S.A."/>
            <person name="Gygi S.P."/>
        </authorList>
    </citation>
    <scope>IDENTIFICATION BY MASS SPECTROMETRY [LARGE SCALE ANALYSIS]</scope>
    <source>
        <tissue>Liver</tissue>
    </source>
</reference>
<reference key="6">
    <citation type="journal article" date="2009" name="Immunity">
        <title>The phagosomal proteome in interferon-gamma-activated macrophages.</title>
        <authorList>
            <person name="Trost M."/>
            <person name="English L."/>
            <person name="Lemieux S."/>
            <person name="Courcelles M."/>
            <person name="Desjardins M."/>
            <person name="Thibault P."/>
        </authorList>
    </citation>
    <scope>PHOSPHORYLATION [LARGE SCALE ANALYSIS] AT SER-1046</scope>
    <scope>IDENTIFICATION BY MASS SPECTROMETRY [LARGE SCALE ANALYSIS]</scope>
</reference>
<reference key="7">
    <citation type="journal article" date="2010" name="Cell">
        <title>A tissue-specific atlas of mouse protein phosphorylation and expression.</title>
        <authorList>
            <person name="Huttlin E.L."/>
            <person name="Jedrychowski M.P."/>
            <person name="Elias J.E."/>
            <person name="Goswami T."/>
            <person name="Rad R."/>
            <person name="Beausoleil S.A."/>
            <person name="Villen J."/>
            <person name="Haas W."/>
            <person name="Sowa M.E."/>
            <person name="Gygi S.P."/>
        </authorList>
    </citation>
    <scope>PHOSPHORYLATION [LARGE SCALE ANALYSIS] AT SER-1005; SER-1046; SER-1111; SER-1113 AND SER-1116</scope>
    <scope>IDENTIFICATION BY MASS SPECTROMETRY [LARGE SCALE ANALYSIS]</scope>
    <source>
        <tissue>Kidney</tissue>
        <tissue>Liver</tissue>
        <tissue>Lung</tissue>
        <tissue>Pancreas</tissue>
        <tissue>Spleen</tissue>
        <tissue>Testis</tissue>
    </source>
</reference>
<evidence type="ECO:0000250" key="1"/>
<evidence type="ECO:0000250" key="2">
    <source>
        <dbReference type="UniProtKB" id="Q9P2D0"/>
    </source>
</evidence>
<evidence type="ECO:0000255" key="3">
    <source>
        <dbReference type="PROSITE-ProRule" id="PRU00037"/>
    </source>
</evidence>
<evidence type="ECO:0000256" key="4">
    <source>
        <dbReference type="SAM" id="MobiDB-lite"/>
    </source>
</evidence>
<evidence type="ECO:0000303" key="5">
    <source>
    </source>
</evidence>
<evidence type="ECO:0000305" key="6"/>
<evidence type="ECO:0007744" key="7">
    <source>
    </source>
</evidence>
<evidence type="ECO:0007744" key="8">
    <source>
    </source>
</evidence>
<feature type="chain" id="PRO_0000280277" description="Inhibitor of Bruton tyrosine kinase">
    <location>
        <begin position="1"/>
        <end position="1352"/>
    </location>
</feature>
<feature type="repeat" description="ANK 1">
    <location>
        <begin position="51"/>
        <end position="80"/>
    </location>
</feature>
<feature type="repeat" description="ANK 2">
    <location>
        <begin position="85"/>
        <end position="114"/>
    </location>
</feature>
<feature type="repeat" description="RCC1 1">
    <location>
        <begin position="141"/>
        <end position="194"/>
    </location>
</feature>
<feature type="repeat" description="RCC1 2">
    <location>
        <begin position="195"/>
        <end position="246"/>
    </location>
</feature>
<feature type="repeat" description="RCC1 3">
    <location>
        <begin position="248"/>
        <end position="301"/>
    </location>
</feature>
<feature type="domain" description="BTB 1" evidence="3">
    <location>
        <begin position="565"/>
        <end position="645"/>
    </location>
</feature>
<feature type="domain" description="BTB 2" evidence="3">
    <location>
        <begin position="769"/>
        <end position="837"/>
    </location>
</feature>
<feature type="region of interest" description="Disordered" evidence="4">
    <location>
        <begin position="692"/>
        <end position="716"/>
    </location>
</feature>
<feature type="region of interest" description="Disordered" evidence="4">
    <location>
        <begin position="976"/>
        <end position="1002"/>
    </location>
</feature>
<feature type="region of interest" description="Disordered" evidence="4">
    <location>
        <begin position="1032"/>
        <end position="1094"/>
    </location>
</feature>
<feature type="compositionally biased region" description="Basic residues" evidence="4">
    <location>
        <begin position="701"/>
        <end position="710"/>
    </location>
</feature>
<feature type="compositionally biased region" description="Basic residues" evidence="4">
    <location>
        <begin position="977"/>
        <end position="989"/>
    </location>
</feature>
<feature type="compositionally biased region" description="Polar residues" evidence="4">
    <location>
        <begin position="993"/>
        <end position="1002"/>
    </location>
</feature>
<feature type="compositionally biased region" description="Polar residues" evidence="4">
    <location>
        <begin position="1084"/>
        <end position="1094"/>
    </location>
</feature>
<feature type="modified residue" description="Phosphoserine" evidence="2">
    <location>
        <position position="991"/>
    </location>
</feature>
<feature type="modified residue" description="Phosphoserine" evidence="8">
    <location>
        <position position="1005"/>
    </location>
</feature>
<feature type="modified residue" description="Phosphoserine" evidence="2">
    <location>
        <position position="1031"/>
    </location>
</feature>
<feature type="modified residue" description="Phosphoserine" evidence="2">
    <location>
        <position position="1034"/>
    </location>
</feature>
<feature type="modified residue" description="Phosphoserine" evidence="2">
    <location>
        <position position="1040"/>
    </location>
</feature>
<feature type="modified residue" description="Phosphoserine" evidence="7 8">
    <location>
        <position position="1046"/>
    </location>
</feature>
<feature type="modified residue" description="Phosphoserine" evidence="2">
    <location>
        <position position="1055"/>
    </location>
</feature>
<feature type="modified residue" description="Phosphoserine" evidence="2">
    <location>
        <position position="1084"/>
    </location>
</feature>
<feature type="modified residue" description="Phosphoserine" evidence="8">
    <location>
        <position position="1111"/>
    </location>
</feature>
<feature type="modified residue" description="Phosphoserine" evidence="8">
    <location>
        <position position="1113"/>
    </location>
</feature>
<feature type="modified residue" description="Phosphoserine" evidence="8">
    <location>
        <position position="1116"/>
    </location>
</feature>
<feature type="splice variant" id="VSP_023605" description="In isoform 2." evidence="5">
    <location>
        <begin position="137"/>
        <end position="237"/>
    </location>
</feature>
<feature type="sequence conflict" description="In Ref. 3; BAE20460." evidence="6" ref="3">
    <original>K</original>
    <variation>E</variation>
    <location>
        <position position="282"/>
    </location>
</feature>
<feature type="sequence conflict" description="In Ref. 4; BAC98163." evidence="6" ref="4">
    <original>A</original>
    <variation>V</variation>
    <location>
        <position position="1189"/>
    </location>
</feature>
<proteinExistence type="evidence at protein level"/>
<dbReference type="EMBL" id="CH466522">
    <property type="protein sequence ID" value="EDL26483.1"/>
    <property type="molecule type" value="Genomic_DNA"/>
</dbReference>
<dbReference type="EMBL" id="BC137798">
    <property type="protein sequence ID" value="AAI37799.1"/>
    <property type="molecule type" value="mRNA"/>
</dbReference>
<dbReference type="EMBL" id="AK030895">
    <property type="protein sequence ID" value="BAE20460.1"/>
    <property type="molecule type" value="mRNA"/>
</dbReference>
<dbReference type="EMBL" id="AK077387">
    <property type="protein sequence ID" value="BAC36779.1"/>
    <property type="status" value="ALT_FRAME"/>
    <property type="molecule type" value="mRNA"/>
</dbReference>
<dbReference type="EMBL" id="AK129353">
    <property type="protein sequence ID" value="BAC98163.1"/>
    <property type="molecule type" value="mRNA"/>
</dbReference>
<dbReference type="CCDS" id="CCDS40712.1">
    <molecule id="Q6ZPR6-1"/>
</dbReference>
<dbReference type="RefSeq" id="NP_001074751.1">
    <molecule id="Q6ZPR6-1"/>
    <property type="nucleotide sequence ID" value="NM_001081282.2"/>
</dbReference>
<dbReference type="SMR" id="Q6ZPR6"/>
<dbReference type="BioGRID" id="224442">
    <property type="interactions" value="7"/>
</dbReference>
<dbReference type="FunCoup" id="Q6ZPR6">
    <property type="interactions" value="2451"/>
</dbReference>
<dbReference type="STRING" id="10090.ENSMUSP00000041145"/>
<dbReference type="iPTMnet" id="Q6ZPR6"/>
<dbReference type="PhosphoSitePlus" id="Q6ZPR6"/>
<dbReference type="SwissPalm" id="Q6ZPR6"/>
<dbReference type="jPOST" id="Q6ZPR6"/>
<dbReference type="PaxDb" id="10090-ENSMUSP00000041145"/>
<dbReference type="PeptideAtlas" id="Q6ZPR6"/>
<dbReference type="ProteomicsDB" id="267207">
    <molecule id="Q6ZPR6-1"/>
</dbReference>
<dbReference type="ProteomicsDB" id="267208">
    <molecule id="Q6ZPR6-2"/>
</dbReference>
<dbReference type="Pumba" id="Q6ZPR6"/>
<dbReference type="Antibodypedia" id="18465">
    <property type="antibodies" value="127 antibodies from 24 providers"/>
</dbReference>
<dbReference type="DNASU" id="108837"/>
<dbReference type="Ensembl" id="ENSMUST00000039213.15">
    <molecule id="Q6ZPR6-1"/>
    <property type="protein sequence ID" value="ENSMUSP00000041145.9"/>
    <property type="gene ID" value="ENSMUSG00000035941.16"/>
</dbReference>
<dbReference type="GeneID" id="108837"/>
<dbReference type="KEGG" id="mmu:108837"/>
<dbReference type="UCSC" id="uc009qww.2">
    <molecule id="Q6ZPR6-1"/>
    <property type="organism name" value="mouse"/>
</dbReference>
<dbReference type="AGR" id="MGI:1918677"/>
<dbReference type="CTD" id="25998"/>
<dbReference type="MGI" id="MGI:1918677">
    <property type="gene designation" value="Ibtk"/>
</dbReference>
<dbReference type="VEuPathDB" id="HostDB:ENSMUSG00000035941"/>
<dbReference type="eggNOG" id="KOG0783">
    <property type="taxonomic scope" value="Eukaryota"/>
</dbReference>
<dbReference type="GeneTree" id="ENSGT00940000156277"/>
<dbReference type="HOGENOM" id="CLU_005713_0_0_1"/>
<dbReference type="InParanoid" id="Q6ZPR6"/>
<dbReference type="OMA" id="CGINTDH"/>
<dbReference type="OrthoDB" id="1893551at2759"/>
<dbReference type="PhylomeDB" id="Q6ZPR6"/>
<dbReference type="TreeFam" id="TF323747"/>
<dbReference type="BioGRID-ORCS" id="108837">
    <property type="hits" value="1 hit in 78 CRISPR screens"/>
</dbReference>
<dbReference type="ChiTaRS" id="Ibtk">
    <property type="organism name" value="mouse"/>
</dbReference>
<dbReference type="PRO" id="PR:Q6ZPR6"/>
<dbReference type="Proteomes" id="UP000000589">
    <property type="component" value="Chromosome 9"/>
</dbReference>
<dbReference type="RNAct" id="Q6ZPR6">
    <property type="molecule type" value="protein"/>
</dbReference>
<dbReference type="Bgee" id="ENSMUSG00000035941">
    <property type="expression patterns" value="Expressed in animal zygote and 261 other cell types or tissues"/>
</dbReference>
<dbReference type="ExpressionAtlas" id="Q6ZPR6">
    <property type="expression patterns" value="baseline and differential"/>
</dbReference>
<dbReference type="GO" id="GO:0005737">
    <property type="term" value="C:cytoplasm"/>
    <property type="evidence" value="ECO:0000266"/>
    <property type="project" value="MGI"/>
</dbReference>
<dbReference type="GO" id="GO:0016020">
    <property type="term" value="C:membrane"/>
    <property type="evidence" value="ECO:0007669"/>
    <property type="project" value="UniProtKB-SubCell"/>
</dbReference>
<dbReference type="GO" id="GO:0005654">
    <property type="term" value="C:nucleoplasm"/>
    <property type="evidence" value="ECO:0007669"/>
    <property type="project" value="Ensembl"/>
</dbReference>
<dbReference type="GO" id="GO:0019901">
    <property type="term" value="F:protein kinase binding"/>
    <property type="evidence" value="ECO:0000266"/>
    <property type="project" value="MGI"/>
</dbReference>
<dbReference type="GO" id="GO:0030292">
    <property type="term" value="F:protein tyrosine kinase inhibitor activity"/>
    <property type="evidence" value="ECO:0000266"/>
    <property type="project" value="MGI"/>
</dbReference>
<dbReference type="GO" id="GO:0051209">
    <property type="term" value="P:release of sequestered calcium ion into cytosol"/>
    <property type="evidence" value="ECO:0000266"/>
    <property type="project" value="MGI"/>
</dbReference>
<dbReference type="CDD" id="cd18500">
    <property type="entry name" value="BACK_IBtk"/>
    <property type="match status" value="1"/>
</dbReference>
<dbReference type="CDD" id="cd18301">
    <property type="entry name" value="BTB1_POZ_IBtk"/>
    <property type="match status" value="1"/>
</dbReference>
<dbReference type="CDD" id="cd18302">
    <property type="entry name" value="BTB2_POZ_IBtk"/>
    <property type="match status" value="1"/>
</dbReference>
<dbReference type="FunFam" id="1.25.40.20:FF:000090">
    <property type="entry name" value="inhibitor of Bruton tyrosine kinase isoform X1"/>
    <property type="match status" value="1"/>
</dbReference>
<dbReference type="FunFam" id="3.30.710.10:FF:000105">
    <property type="entry name" value="inhibitor of Bruton tyrosine kinase isoform X1"/>
    <property type="match status" value="1"/>
</dbReference>
<dbReference type="FunFam" id="2.130.10.30:FF:000011">
    <property type="entry name" value="inhibitor of Bruton tyrosine kinase isoform X2"/>
    <property type="match status" value="1"/>
</dbReference>
<dbReference type="Gene3D" id="6.10.250.3030">
    <property type="match status" value="1"/>
</dbReference>
<dbReference type="Gene3D" id="1.25.40.20">
    <property type="entry name" value="Ankyrin repeat-containing domain"/>
    <property type="match status" value="2"/>
</dbReference>
<dbReference type="Gene3D" id="3.30.710.10">
    <property type="entry name" value="Potassium Channel Kv1.1, Chain A"/>
    <property type="match status" value="2"/>
</dbReference>
<dbReference type="Gene3D" id="2.130.10.30">
    <property type="entry name" value="Regulator of chromosome condensation 1/beta-lactamase-inhibitor protein II"/>
    <property type="match status" value="1"/>
</dbReference>
<dbReference type="InterPro" id="IPR002110">
    <property type="entry name" value="Ankyrin_rpt"/>
</dbReference>
<dbReference type="InterPro" id="IPR036770">
    <property type="entry name" value="Ankyrin_rpt-contain_sf"/>
</dbReference>
<dbReference type="InterPro" id="IPR000210">
    <property type="entry name" value="BTB/POZ_dom"/>
</dbReference>
<dbReference type="InterPro" id="IPR009091">
    <property type="entry name" value="RCC1/BLIP-II"/>
</dbReference>
<dbReference type="InterPro" id="IPR000408">
    <property type="entry name" value="Reg_chr_condens"/>
</dbReference>
<dbReference type="InterPro" id="IPR051625">
    <property type="entry name" value="Signaling_Regulatory_Domain"/>
</dbReference>
<dbReference type="InterPro" id="IPR011333">
    <property type="entry name" value="SKP1/BTB/POZ_sf"/>
</dbReference>
<dbReference type="PANTHER" id="PTHR22872">
    <property type="entry name" value="BTK-BINDING PROTEIN-RELATED"/>
    <property type="match status" value="1"/>
</dbReference>
<dbReference type="PANTHER" id="PTHR22872:SF2">
    <property type="entry name" value="INHIBITOR OF BRUTON TYROSINE KINASE"/>
    <property type="match status" value="1"/>
</dbReference>
<dbReference type="Pfam" id="PF12796">
    <property type="entry name" value="Ank_2"/>
    <property type="match status" value="1"/>
</dbReference>
<dbReference type="Pfam" id="PF00651">
    <property type="entry name" value="BTB"/>
    <property type="match status" value="2"/>
</dbReference>
<dbReference type="Pfam" id="PF00415">
    <property type="entry name" value="RCC1"/>
    <property type="match status" value="3"/>
</dbReference>
<dbReference type="SMART" id="SM00248">
    <property type="entry name" value="ANK"/>
    <property type="match status" value="2"/>
</dbReference>
<dbReference type="SMART" id="SM00225">
    <property type="entry name" value="BTB"/>
    <property type="match status" value="2"/>
</dbReference>
<dbReference type="SUPFAM" id="SSF48403">
    <property type="entry name" value="Ankyrin repeat"/>
    <property type="match status" value="1"/>
</dbReference>
<dbReference type="SUPFAM" id="SSF54695">
    <property type="entry name" value="POZ domain"/>
    <property type="match status" value="2"/>
</dbReference>
<dbReference type="SUPFAM" id="SSF50985">
    <property type="entry name" value="RCC1/BLIP-II"/>
    <property type="match status" value="1"/>
</dbReference>
<dbReference type="PROSITE" id="PS50297">
    <property type="entry name" value="ANK_REP_REGION"/>
    <property type="match status" value="1"/>
</dbReference>
<dbReference type="PROSITE" id="PS50088">
    <property type="entry name" value="ANK_REPEAT"/>
    <property type="match status" value="2"/>
</dbReference>
<dbReference type="PROSITE" id="PS50097">
    <property type="entry name" value="BTB"/>
    <property type="match status" value="2"/>
</dbReference>
<dbReference type="PROSITE" id="PS50012">
    <property type="entry name" value="RCC1_3"/>
    <property type="match status" value="3"/>
</dbReference>
<sequence length="1352" mass="149569">MDAATPDCTSKCRSLKHALDVLSVVTKGSESQIKSFLARYCYNAATVKDAFGRNAGHLASSCGKKGVLDWLIEKGVDLLVKDKESGWTALHRSVFYGHIDCVWSLLKHGVSLYMQDKEGLSPLDLLMKDRPTHVVFKDTDPTEVYTWGDNTNFTLGHGSQNSKHHPELLDLFSRSGVYVKQVVLCKFHSVFLSQKGQVYTCGHGRGGRLGHGDEQTCLVPRLVEGLSGHNCSQVAAAKDHTVVLTDDGCVYTFGLNMFHQLGIIPPPASCNVPRQIQAKYLKGRTIIGVAAGRFHTVLWTREAVYTLGLNGGQLGHLLDPNGEKCVTTPRQVSALHHKDIAVSLVAASDGATVCVTTRGDIYLLADYQCKKMATKQLNLKKVLVSGGCMEYKVDPEHLTENGGQKICVLAMDGAGRVFCWRSISSSLKQCRWAYPRQVSISDIALNRNEILFVTQDGEGFKGKWFEDKRKNSEKKADILPNLHHSSSDVSCVPDTNSVYERIRLEKLPFAHRAVSVSTDPSGCNFAILQSDPKTSLYEIPVVSSSSFFEEFGKLLRETDEMDSFHDVTFQVGNRHFPAHKYILAVRSDFFQKLFLSDGSSLELTDVYQKDEDAAGCHLFVVEKVHPDLFEYLLQFMYTDTCDLLTHGFKPRMIVKRKAEDCEGSPDSHLHTVNCHVDDKQKSAFEVYRSNQAHTLSERQKSKPKSSKKGKGVGDDDPVRMLQSVAKKFGLSNLSSRLEGVRLENEKINVIAKKTGNKLKLSQKKCSFLYDVTMKSVDGKEFSCHKCVLCARLEYFHSMLSRSWIEASSCAALEMPIQSEILKVILDYLYTDEAVVIKESQNVDFVCSVLVVADQLLITRLKEICEVALTENLTLKNAAMLLEFAALYNAGQLKLSCLQFIGLNMAALLEARSLDVLSEDVLKDLSIFYRKMIPAMERRVITPYQDGPDISSMQVEDGEVFFKEEINMEPNYSETMFKKAKTRAKKKPRKRSDSSGGYTLSDVIQSPPSAGLLKSAKTNSVESLPELLTSDSEGSYAGVASPRDLQSPDFTAGFHSDKVEGKAKPYVNGIPPPCTREDVKPWEKSPTTKSAPQFIPSNRVDTAASSSWLAGSCSPVSPPVVDLRTIMETEENRQKYGAAPKSNLGKIISHGIKLSQKQRKMIALTTKENNSGTNSMEAILTAPSKSPKPANAWAPLHSPLSRSFRDFLLEEKKPVPGYGSGDHVKKVCFKGTENSPALNVARCSTHGTPGLESNHVSDFPLLDSPNPWQSSSLAASPAVAPVTFASIVEEERQQEAALIRSREKPLALIQVEEHAIQDLLVFYEAFGNPEEFVVVERAPQGPLAVPMWNKHGC</sequence>